<dbReference type="EC" id="3.2.2.27" evidence="1"/>
<dbReference type="EMBL" id="AP008934">
    <property type="protein sequence ID" value="BAE19279.1"/>
    <property type="molecule type" value="Genomic_DNA"/>
</dbReference>
<dbReference type="RefSeq" id="WP_011303771.1">
    <property type="nucleotide sequence ID" value="NZ_MTGA01000039.1"/>
</dbReference>
<dbReference type="SMR" id="Q49VD1"/>
<dbReference type="GeneID" id="3616342"/>
<dbReference type="KEGG" id="ssp:SSP2134"/>
<dbReference type="PATRIC" id="fig|342451.11.peg.2126"/>
<dbReference type="eggNOG" id="COG0692">
    <property type="taxonomic scope" value="Bacteria"/>
</dbReference>
<dbReference type="HOGENOM" id="CLU_032162_3_1_9"/>
<dbReference type="OrthoDB" id="9804372at2"/>
<dbReference type="Proteomes" id="UP000006371">
    <property type="component" value="Chromosome"/>
</dbReference>
<dbReference type="GO" id="GO:0005737">
    <property type="term" value="C:cytoplasm"/>
    <property type="evidence" value="ECO:0007669"/>
    <property type="project" value="UniProtKB-SubCell"/>
</dbReference>
<dbReference type="GO" id="GO:0004844">
    <property type="term" value="F:uracil DNA N-glycosylase activity"/>
    <property type="evidence" value="ECO:0007669"/>
    <property type="project" value="UniProtKB-UniRule"/>
</dbReference>
<dbReference type="GO" id="GO:0097510">
    <property type="term" value="P:base-excision repair, AP site formation via deaminated base removal"/>
    <property type="evidence" value="ECO:0007669"/>
    <property type="project" value="TreeGrafter"/>
</dbReference>
<dbReference type="CDD" id="cd10027">
    <property type="entry name" value="UDG-F1-like"/>
    <property type="match status" value="1"/>
</dbReference>
<dbReference type="FunFam" id="3.40.470.10:FF:000001">
    <property type="entry name" value="Uracil-DNA glycosylase"/>
    <property type="match status" value="1"/>
</dbReference>
<dbReference type="Gene3D" id="3.40.470.10">
    <property type="entry name" value="Uracil-DNA glycosylase-like domain"/>
    <property type="match status" value="1"/>
</dbReference>
<dbReference type="HAMAP" id="MF_00148">
    <property type="entry name" value="UDG"/>
    <property type="match status" value="1"/>
</dbReference>
<dbReference type="InterPro" id="IPR002043">
    <property type="entry name" value="UDG_fam1"/>
</dbReference>
<dbReference type="InterPro" id="IPR018085">
    <property type="entry name" value="Ura-DNA_Glyclase_AS"/>
</dbReference>
<dbReference type="InterPro" id="IPR005122">
    <property type="entry name" value="Uracil-DNA_glycosylase-like"/>
</dbReference>
<dbReference type="InterPro" id="IPR036895">
    <property type="entry name" value="Uracil-DNA_glycosylase-like_sf"/>
</dbReference>
<dbReference type="NCBIfam" id="NF003588">
    <property type="entry name" value="PRK05254.1-1"/>
    <property type="match status" value="1"/>
</dbReference>
<dbReference type="NCBIfam" id="NF003589">
    <property type="entry name" value="PRK05254.1-2"/>
    <property type="match status" value="1"/>
</dbReference>
<dbReference type="NCBIfam" id="NF003591">
    <property type="entry name" value="PRK05254.1-4"/>
    <property type="match status" value="1"/>
</dbReference>
<dbReference type="NCBIfam" id="NF003592">
    <property type="entry name" value="PRK05254.1-5"/>
    <property type="match status" value="1"/>
</dbReference>
<dbReference type="NCBIfam" id="TIGR00628">
    <property type="entry name" value="ung"/>
    <property type="match status" value="1"/>
</dbReference>
<dbReference type="PANTHER" id="PTHR11264">
    <property type="entry name" value="URACIL-DNA GLYCOSYLASE"/>
    <property type="match status" value="1"/>
</dbReference>
<dbReference type="PANTHER" id="PTHR11264:SF0">
    <property type="entry name" value="URACIL-DNA GLYCOSYLASE"/>
    <property type="match status" value="1"/>
</dbReference>
<dbReference type="Pfam" id="PF03167">
    <property type="entry name" value="UDG"/>
    <property type="match status" value="1"/>
</dbReference>
<dbReference type="SMART" id="SM00986">
    <property type="entry name" value="UDG"/>
    <property type="match status" value="1"/>
</dbReference>
<dbReference type="SMART" id="SM00987">
    <property type="entry name" value="UreE_C"/>
    <property type="match status" value="1"/>
</dbReference>
<dbReference type="SUPFAM" id="SSF52141">
    <property type="entry name" value="Uracil-DNA glycosylase-like"/>
    <property type="match status" value="1"/>
</dbReference>
<dbReference type="PROSITE" id="PS00130">
    <property type="entry name" value="U_DNA_GLYCOSYLASE"/>
    <property type="match status" value="1"/>
</dbReference>
<gene>
    <name evidence="1" type="primary">ung</name>
    <name type="ordered locus">SSP2134</name>
</gene>
<accession>Q49VD1</accession>
<sequence>MEWSDVFHEITTRHDFAAMHDFLEKEYTTEIVYPDRKNIYQAFDLTPFEQVKVVILGQDPYHGPNQAHGLAFSVQPDAKFPPSLRNMYKELQDDVGCIRKSPHLQDWAREGVLLLNTVLTVRQGEAHSHKNIGWETFTDEVIQAVSEHLTHVVFILWGKPAQQKIKLIDTSKHHIIQSPHPSPLSAYRGFFGSKPYSQANTYLQANGKQPVNWCESEV</sequence>
<protein>
    <recommendedName>
        <fullName evidence="1">Uracil-DNA glycosylase</fullName>
        <shortName evidence="1">UDG</shortName>
        <ecNumber evidence="1">3.2.2.27</ecNumber>
    </recommendedName>
</protein>
<reference key="1">
    <citation type="journal article" date="2005" name="Proc. Natl. Acad. Sci. U.S.A.">
        <title>Whole genome sequence of Staphylococcus saprophyticus reveals the pathogenesis of uncomplicated urinary tract infection.</title>
        <authorList>
            <person name="Kuroda M."/>
            <person name="Yamashita A."/>
            <person name="Hirakawa H."/>
            <person name="Kumano M."/>
            <person name="Morikawa K."/>
            <person name="Higashide M."/>
            <person name="Maruyama A."/>
            <person name="Inose Y."/>
            <person name="Matoba K."/>
            <person name="Toh H."/>
            <person name="Kuhara S."/>
            <person name="Hattori M."/>
            <person name="Ohta T."/>
        </authorList>
    </citation>
    <scope>NUCLEOTIDE SEQUENCE [LARGE SCALE GENOMIC DNA]</scope>
    <source>
        <strain>ATCC 15305 / DSM 20229 / NCIMB 8711 / NCTC 7292 / S-41</strain>
    </source>
</reference>
<comment type="function">
    <text evidence="1">Excises uracil residues from the DNA which can arise as a result of misincorporation of dUMP residues by DNA polymerase or due to deamination of cytosine.</text>
</comment>
<comment type="catalytic activity">
    <reaction evidence="1">
        <text>Hydrolyzes single-stranded DNA or mismatched double-stranded DNA and polynucleotides, releasing free uracil.</text>
        <dbReference type="EC" id="3.2.2.27"/>
    </reaction>
</comment>
<comment type="subcellular location">
    <subcellularLocation>
        <location evidence="1">Cytoplasm</location>
    </subcellularLocation>
</comment>
<comment type="similarity">
    <text evidence="1">Belongs to the uracil-DNA glycosylase (UDG) superfamily. UNG family.</text>
</comment>
<name>UNG_STAS1</name>
<proteinExistence type="inferred from homology"/>
<organism>
    <name type="scientific">Staphylococcus saprophyticus subsp. saprophyticus (strain ATCC 15305 / DSM 20229 / NCIMB 8711 / NCTC 7292 / S-41)</name>
    <dbReference type="NCBI Taxonomy" id="342451"/>
    <lineage>
        <taxon>Bacteria</taxon>
        <taxon>Bacillati</taxon>
        <taxon>Bacillota</taxon>
        <taxon>Bacilli</taxon>
        <taxon>Bacillales</taxon>
        <taxon>Staphylococcaceae</taxon>
        <taxon>Staphylococcus</taxon>
    </lineage>
</organism>
<evidence type="ECO:0000255" key="1">
    <source>
        <dbReference type="HAMAP-Rule" id="MF_00148"/>
    </source>
</evidence>
<feature type="chain" id="PRO_1000009948" description="Uracil-DNA glycosylase">
    <location>
        <begin position="1"/>
        <end position="218"/>
    </location>
</feature>
<feature type="active site" description="Proton acceptor" evidence="1">
    <location>
        <position position="59"/>
    </location>
</feature>
<keyword id="KW-0963">Cytoplasm</keyword>
<keyword id="KW-0227">DNA damage</keyword>
<keyword id="KW-0234">DNA repair</keyword>
<keyword id="KW-0378">Hydrolase</keyword>
<keyword id="KW-1185">Reference proteome</keyword>